<sequence length="686" mass="75544">MTQNTADTHASAQAQEVIAKMRTLIAQVRKHNNAYYVMDEPTISDNEYDQLRLSLIELEERYPELTQPDSPTASVGDNPLPSFSQVQHDIAMLSLGNIFNYQDLQEFMRRVNDRLSDADRNPEYEIEMKLDGLAVSLKYHNGQFVRGVTRGDGQMGEDITQNVKTINNIPLVIEAAQDIDVLEVRGEVLMPKAGFKRLNRLAQENGDKTFANPRNAAAGSLRQLDPAVAASRPLAFYAYSVNQGLPEAITLQSAALTWLKQLGFTVSDFERVKTAQQVQDYYESMIQKRADLAFEIDGMVIKVDDLTLQSQLGALSREPRWATAYKFPAETVMTTLNSIEWQVGRTGQLTPVGKLEPVQVGGVTVSNVTLHNFGEIQRLDVRAGDTVSVHRAGDVIPKVTRVWHDLRPEGTSAVTLPTHCPVCDSPVVLPEGEALARCTGELFCPAQQQEALIHFVSRKAMDIDGLGERWLISFFEHGIVKTVADIYHLNEHADELVTLEKLGEKSVSNMLRAIEESKKTTLARFIYALGIRGVGETTAQNLAQYFGDLPELMGASIDALEAVPDVGHITAELIYNFFRAEHNIEVINALQQAGVYWDKVEQQALDNLPLEGQTWVITGTLVASGMSRDDAKAHLQALGAKVSGSVSAKTSALLAGEKAGSKLTKAQSLGVRVVLEDEFLKMIGAS</sequence>
<organism>
    <name type="scientific">Psychrobacter sp. (strain PRwf-1)</name>
    <dbReference type="NCBI Taxonomy" id="349106"/>
    <lineage>
        <taxon>Bacteria</taxon>
        <taxon>Pseudomonadati</taxon>
        <taxon>Pseudomonadota</taxon>
        <taxon>Gammaproteobacteria</taxon>
        <taxon>Moraxellales</taxon>
        <taxon>Moraxellaceae</taxon>
        <taxon>Psychrobacter</taxon>
    </lineage>
</organism>
<protein>
    <recommendedName>
        <fullName evidence="1">DNA ligase</fullName>
        <ecNumber evidence="1">6.5.1.2</ecNumber>
    </recommendedName>
    <alternativeName>
        <fullName evidence="1">Polydeoxyribonucleotide synthase [NAD(+)]</fullName>
    </alternativeName>
</protein>
<feature type="chain" id="PRO_0000340371" description="DNA ligase">
    <location>
        <begin position="1"/>
        <end position="686"/>
    </location>
</feature>
<feature type="domain" description="BRCT" evidence="1">
    <location>
        <begin position="605"/>
        <end position="686"/>
    </location>
</feature>
<feature type="active site" description="N6-AMP-lysine intermediate" evidence="1">
    <location>
        <position position="129"/>
    </location>
</feature>
<feature type="binding site" evidence="1">
    <location>
        <begin position="45"/>
        <end position="49"/>
    </location>
    <ligand>
        <name>NAD(+)</name>
        <dbReference type="ChEBI" id="CHEBI:57540"/>
    </ligand>
</feature>
<feature type="binding site" evidence="1">
    <location>
        <begin position="94"/>
        <end position="95"/>
    </location>
    <ligand>
        <name>NAD(+)</name>
        <dbReference type="ChEBI" id="CHEBI:57540"/>
    </ligand>
</feature>
<feature type="binding site" evidence="1">
    <location>
        <position position="127"/>
    </location>
    <ligand>
        <name>NAD(+)</name>
        <dbReference type="ChEBI" id="CHEBI:57540"/>
    </ligand>
</feature>
<feature type="binding site" evidence="1">
    <location>
        <position position="150"/>
    </location>
    <ligand>
        <name>NAD(+)</name>
        <dbReference type="ChEBI" id="CHEBI:57540"/>
    </ligand>
</feature>
<feature type="binding site" evidence="1">
    <location>
        <position position="187"/>
    </location>
    <ligand>
        <name>NAD(+)</name>
        <dbReference type="ChEBI" id="CHEBI:57540"/>
    </ligand>
</feature>
<feature type="binding site" evidence="1">
    <location>
        <position position="302"/>
    </location>
    <ligand>
        <name>NAD(+)</name>
        <dbReference type="ChEBI" id="CHEBI:57540"/>
    </ligand>
</feature>
<feature type="binding site" evidence="1">
    <location>
        <position position="326"/>
    </location>
    <ligand>
        <name>NAD(+)</name>
        <dbReference type="ChEBI" id="CHEBI:57540"/>
    </ligand>
</feature>
<feature type="binding site" evidence="1">
    <location>
        <position position="420"/>
    </location>
    <ligand>
        <name>Zn(2+)</name>
        <dbReference type="ChEBI" id="CHEBI:29105"/>
    </ligand>
</feature>
<feature type="binding site" evidence="1">
    <location>
        <position position="423"/>
    </location>
    <ligand>
        <name>Zn(2+)</name>
        <dbReference type="ChEBI" id="CHEBI:29105"/>
    </ligand>
</feature>
<feature type="binding site" evidence="1">
    <location>
        <position position="438"/>
    </location>
    <ligand>
        <name>Zn(2+)</name>
        <dbReference type="ChEBI" id="CHEBI:29105"/>
    </ligand>
</feature>
<feature type="binding site" evidence="1">
    <location>
        <position position="444"/>
    </location>
    <ligand>
        <name>Zn(2+)</name>
        <dbReference type="ChEBI" id="CHEBI:29105"/>
    </ligand>
</feature>
<name>DNLJ_PSYWF</name>
<comment type="function">
    <text evidence="1">DNA ligase that catalyzes the formation of phosphodiester linkages between 5'-phosphoryl and 3'-hydroxyl groups in double-stranded DNA using NAD as a coenzyme and as the energy source for the reaction. It is essential for DNA replication and repair of damaged DNA.</text>
</comment>
<comment type="catalytic activity">
    <reaction evidence="1">
        <text>NAD(+) + (deoxyribonucleotide)n-3'-hydroxyl + 5'-phospho-(deoxyribonucleotide)m = (deoxyribonucleotide)n+m + AMP + beta-nicotinamide D-nucleotide.</text>
        <dbReference type="EC" id="6.5.1.2"/>
    </reaction>
</comment>
<comment type="cofactor">
    <cofactor evidence="1">
        <name>Mg(2+)</name>
        <dbReference type="ChEBI" id="CHEBI:18420"/>
    </cofactor>
    <cofactor evidence="1">
        <name>Mn(2+)</name>
        <dbReference type="ChEBI" id="CHEBI:29035"/>
    </cofactor>
</comment>
<comment type="similarity">
    <text evidence="1">Belongs to the NAD-dependent DNA ligase family. LigA subfamily.</text>
</comment>
<gene>
    <name evidence="1" type="primary">ligA</name>
    <name type="ordered locus">PsycPRwf_0473</name>
</gene>
<dbReference type="EC" id="6.5.1.2" evidence="1"/>
<dbReference type="EMBL" id="CP000713">
    <property type="protein sequence ID" value="ABQ93428.1"/>
    <property type="molecule type" value="Genomic_DNA"/>
</dbReference>
<dbReference type="SMR" id="A5WCN7"/>
<dbReference type="STRING" id="349106.PsycPRwf_0473"/>
<dbReference type="KEGG" id="prw:PsycPRwf_0473"/>
<dbReference type="eggNOG" id="COG0272">
    <property type="taxonomic scope" value="Bacteria"/>
</dbReference>
<dbReference type="HOGENOM" id="CLU_007764_2_1_6"/>
<dbReference type="GO" id="GO:0005829">
    <property type="term" value="C:cytosol"/>
    <property type="evidence" value="ECO:0007669"/>
    <property type="project" value="TreeGrafter"/>
</dbReference>
<dbReference type="GO" id="GO:0003677">
    <property type="term" value="F:DNA binding"/>
    <property type="evidence" value="ECO:0007669"/>
    <property type="project" value="InterPro"/>
</dbReference>
<dbReference type="GO" id="GO:0003911">
    <property type="term" value="F:DNA ligase (NAD+) activity"/>
    <property type="evidence" value="ECO:0007669"/>
    <property type="project" value="UniProtKB-UniRule"/>
</dbReference>
<dbReference type="GO" id="GO:0046872">
    <property type="term" value="F:metal ion binding"/>
    <property type="evidence" value="ECO:0007669"/>
    <property type="project" value="UniProtKB-KW"/>
</dbReference>
<dbReference type="GO" id="GO:0006281">
    <property type="term" value="P:DNA repair"/>
    <property type="evidence" value="ECO:0007669"/>
    <property type="project" value="UniProtKB-KW"/>
</dbReference>
<dbReference type="GO" id="GO:0006260">
    <property type="term" value="P:DNA replication"/>
    <property type="evidence" value="ECO:0007669"/>
    <property type="project" value="UniProtKB-KW"/>
</dbReference>
<dbReference type="CDD" id="cd17748">
    <property type="entry name" value="BRCT_DNA_ligase_like"/>
    <property type="match status" value="1"/>
</dbReference>
<dbReference type="CDD" id="cd00114">
    <property type="entry name" value="LIGANc"/>
    <property type="match status" value="1"/>
</dbReference>
<dbReference type="FunFam" id="1.10.150.20:FF:000006">
    <property type="entry name" value="DNA ligase"/>
    <property type="match status" value="1"/>
</dbReference>
<dbReference type="FunFam" id="1.10.150.20:FF:000007">
    <property type="entry name" value="DNA ligase"/>
    <property type="match status" value="1"/>
</dbReference>
<dbReference type="FunFam" id="2.40.50.140:FF:000012">
    <property type="entry name" value="DNA ligase"/>
    <property type="match status" value="1"/>
</dbReference>
<dbReference type="FunFam" id="3.30.470.30:FF:000001">
    <property type="entry name" value="DNA ligase"/>
    <property type="match status" value="1"/>
</dbReference>
<dbReference type="Gene3D" id="6.20.10.30">
    <property type="match status" value="1"/>
</dbReference>
<dbReference type="Gene3D" id="1.10.150.20">
    <property type="entry name" value="5' to 3' exonuclease, C-terminal subdomain"/>
    <property type="match status" value="2"/>
</dbReference>
<dbReference type="Gene3D" id="3.40.50.10190">
    <property type="entry name" value="BRCT domain"/>
    <property type="match status" value="1"/>
</dbReference>
<dbReference type="Gene3D" id="3.30.470.30">
    <property type="entry name" value="DNA ligase/mRNA capping enzyme"/>
    <property type="match status" value="1"/>
</dbReference>
<dbReference type="Gene3D" id="1.10.287.610">
    <property type="entry name" value="Helix hairpin bin"/>
    <property type="match status" value="1"/>
</dbReference>
<dbReference type="Gene3D" id="2.40.50.140">
    <property type="entry name" value="Nucleic acid-binding proteins"/>
    <property type="match status" value="1"/>
</dbReference>
<dbReference type="HAMAP" id="MF_01588">
    <property type="entry name" value="DNA_ligase_A"/>
    <property type="match status" value="1"/>
</dbReference>
<dbReference type="InterPro" id="IPR001357">
    <property type="entry name" value="BRCT_dom"/>
</dbReference>
<dbReference type="InterPro" id="IPR036420">
    <property type="entry name" value="BRCT_dom_sf"/>
</dbReference>
<dbReference type="InterPro" id="IPR041663">
    <property type="entry name" value="DisA/LigA_HHH"/>
</dbReference>
<dbReference type="InterPro" id="IPR001679">
    <property type="entry name" value="DNA_ligase"/>
</dbReference>
<dbReference type="InterPro" id="IPR018239">
    <property type="entry name" value="DNA_ligase_AS"/>
</dbReference>
<dbReference type="InterPro" id="IPR033136">
    <property type="entry name" value="DNA_ligase_CS"/>
</dbReference>
<dbReference type="InterPro" id="IPR013839">
    <property type="entry name" value="DNAligase_adenylation"/>
</dbReference>
<dbReference type="InterPro" id="IPR013840">
    <property type="entry name" value="DNAligase_N"/>
</dbReference>
<dbReference type="InterPro" id="IPR003583">
    <property type="entry name" value="Hlx-hairpin-Hlx_DNA-bd_motif"/>
</dbReference>
<dbReference type="InterPro" id="IPR012340">
    <property type="entry name" value="NA-bd_OB-fold"/>
</dbReference>
<dbReference type="InterPro" id="IPR004150">
    <property type="entry name" value="NAD_DNA_ligase_OB"/>
</dbReference>
<dbReference type="InterPro" id="IPR010994">
    <property type="entry name" value="RuvA_2-like"/>
</dbReference>
<dbReference type="InterPro" id="IPR004149">
    <property type="entry name" value="Znf_DNAligase_C4"/>
</dbReference>
<dbReference type="NCBIfam" id="TIGR00575">
    <property type="entry name" value="dnlj"/>
    <property type="match status" value="1"/>
</dbReference>
<dbReference type="NCBIfam" id="NF005932">
    <property type="entry name" value="PRK07956.1"/>
    <property type="match status" value="1"/>
</dbReference>
<dbReference type="PANTHER" id="PTHR23389">
    <property type="entry name" value="CHROMOSOME TRANSMISSION FIDELITY FACTOR 18"/>
    <property type="match status" value="1"/>
</dbReference>
<dbReference type="PANTHER" id="PTHR23389:SF9">
    <property type="entry name" value="DNA LIGASE"/>
    <property type="match status" value="1"/>
</dbReference>
<dbReference type="Pfam" id="PF00533">
    <property type="entry name" value="BRCT"/>
    <property type="match status" value="1"/>
</dbReference>
<dbReference type="Pfam" id="PF01653">
    <property type="entry name" value="DNA_ligase_aden"/>
    <property type="match status" value="1"/>
</dbReference>
<dbReference type="Pfam" id="PF03120">
    <property type="entry name" value="DNA_ligase_OB"/>
    <property type="match status" value="1"/>
</dbReference>
<dbReference type="Pfam" id="PF03119">
    <property type="entry name" value="DNA_ligase_ZBD"/>
    <property type="match status" value="1"/>
</dbReference>
<dbReference type="Pfam" id="PF12826">
    <property type="entry name" value="HHH_2"/>
    <property type="match status" value="1"/>
</dbReference>
<dbReference type="Pfam" id="PF22745">
    <property type="entry name" value="Nlig-Ia"/>
    <property type="match status" value="1"/>
</dbReference>
<dbReference type="PIRSF" id="PIRSF001604">
    <property type="entry name" value="LigA"/>
    <property type="match status" value="1"/>
</dbReference>
<dbReference type="SMART" id="SM00292">
    <property type="entry name" value="BRCT"/>
    <property type="match status" value="1"/>
</dbReference>
<dbReference type="SMART" id="SM00278">
    <property type="entry name" value="HhH1"/>
    <property type="match status" value="4"/>
</dbReference>
<dbReference type="SMART" id="SM00532">
    <property type="entry name" value="LIGANc"/>
    <property type="match status" value="1"/>
</dbReference>
<dbReference type="SUPFAM" id="SSF52113">
    <property type="entry name" value="BRCT domain"/>
    <property type="match status" value="1"/>
</dbReference>
<dbReference type="SUPFAM" id="SSF56091">
    <property type="entry name" value="DNA ligase/mRNA capping enzyme, catalytic domain"/>
    <property type="match status" value="1"/>
</dbReference>
<dbReference type="SUPFAM" id="SSF50249">
    <property type="entry name" value="Nucleic acid-binding proteins"/>
    <property type="match status" value="1"/>
</dbReference>
<dbReference type="SUPFAM" id="SSF47781">
    <property type="entry name" value="RuvA domain 2-like"/>
    <property type="match status" value="1"/>
</dbReference>
<dbReference type="PROSITE" id="PS50172">
    <property type="entry name" value="BRCT"/>
    <property type="match status" value="1"/>
</dbReference>
<dbReference type="PROSITE" id="PS01055">
    <property type="entry name" value="DNA_LIGASE_N1"/>
    <property type="match status" value="1"/>
</dbReference>
<dbReference type="PROSITE" id="PS01056">
    <property type="entry name" value="DNA_LIGASE_N2"/>
    <property type="match status" value="1"/>
</dbReference>
<reference key="1">
    <citation type="submission" date="2007-05" db="EMBL/GenBank/DDBJ databases">
        <title>Complete sequence of chromosome of Psychrobacter sp. PRwf-1.</title>
        <authorList>
            <consortium name="US DOE Joint Genome Institute"/>
            <person name="Copeland A."/>
            <person name="Lucas S."/>
            <person name="Lapidus A."/>
            <person name="Barry K."/>
            <person name="Detter J.C."/>
            <person name="Glavina del Rio T."/>
            <person name="Hammon N."/>
            <person name="Israni S."/>
            <person name="Dalin E."/>
            <person name="Tice H."/>
            <person name="Pitluck S."/>
            <person name="Chain P."/>
            <person name="Malfatti S."/>
            <person name="Shin M."/>
            <person name="Vergez L."/>
            <person name="Schmutz J."/>
            <person name="Larimer F."/>
            <person name="Land M."/>
            <person name="Hauser L."/>
            <person name="Kyrpides N."/>
            <person name="Kim E."/>
            <person name="Tiedje J."/>
            <person name="Richardson P."/>
        </authorList>
    </citation>
    <scope>NUCLEOTIDE SEQUENCE [LARGE SCALE GENOMIC DNA]</scope>
    <source>
        <strain>PRwf-1</strain>
    </source>
</reference>
<keyword id="KW-0227">DNA damage</keyword>
<keyword id="KW-0234">DNA repair</keyword>
<keyword id="KW-0235">DNA replication</keyword>
<keyword id="KW-0436">Ligase</keyword>
<keyword id="KW-0460">Magnesium</keyword>
<keyword id="KW-0464">Manganese</keyword>
<keyword id="KW-0479">Metal-binding</keyword>
<keyword id="KW-0520">NAD</keyword>
<keyword id="KW-0862">Zinc</keyword>
<evidence type="ECO:0000255" key="1">
    <source>
        <dbReference type="HAMAP-Rule" id="MF_01588"/>
    </source>
</evidence>
<accession>A5WCN7</accession>
<proteinExistence type="inferred from homology"/>